<evidence type="ECO:0000255" key="1"/>
<evidence type="ECO:0000269" key="2">
    <source>
    </source>
</evidence>
<evidence type="ECO:0000305" key="3"/>
<evidence type="ECO:0000312" key="4">
    <source>
        <dbReference type="EMBL" id="CAB12203.2"/>
    </source>
</evidence>
<sequence>MKRNRWWIILLLFLVFLPKTSFAHAYIVKSSPGENSELKSAPAQVEIEFNEPVEEGFHYIKVYNSNGDRVDTDKTEIKKDNHHIMTVKLKKNLPKDVYRAEWNAVSADGHPVSGVIPFSIGKADGGFSSQKAADSALNPGTAADRAILYTALSLFIGTVFFHLFWYKGKSEQLVKRTRRILTGSIAALGLALLLQLPIQTKANAGGGWGSAFQPGYIRETLFETAGGSIWIIQAALFVLLALSVIPAIRKNRFSSFGYWTAPLIFFFGLLLAKAFTGHAAVVEEKTVGILMDFLHLTSASIWVGGIAALVLLLSKEWRQPDKTLAWETVRRFSPWALTAVGVILFSGLLNGFFIIRSMDSLFHTAYGQALLVKSGLFVFMLVLGAIHFLLTRKQRRTGISRTLKAEWAIGIAVLITAAVFTSLPSPPEPAPEPFYQTKAIENGQSVSLSISPNQPGKNVFELRVTDHNGDPVKNIQQITLTVYKTGLSGSENKSTFTLKEKTKGVFQDQNLSINEKGNWKIKVHGLTGDFNEINIMFTKTN</sequence>
<protein>
    <recommendedName>
        <fullName evidence="3">Copper transport protein CutJ</fullName>
    </recommendedName>
</protein>
<keyword id="KW-1003">Cell membrane</keyword>
<keyword id="KW-0186">Copper</keyword>
<keyword id="KW-0187">Copper transport</keyword>
<keyword id="KW-0406">Ion transport</keyword>
<keyword id="KW-0472">Membrane</keyword>
<keyword id="KW-0479">Metal-binding</keyword>
<keyword id="KW-1185">Reference proteome</keyword>
<keyword id="KW-0732">Signal</keyword>
<keyword id="KW-0812">Transmembrane</keyword>
<keyword id="KW-1133">Transmembrane helix</keyword>
<keyword id="KW-0813">Transport</keyword>
<dbReference type="EMBL" id="D50453">
    <property type="protein sequence ID" value="BAA09026.1"/>
    <property type="molecule type" value="Genomic_DNA"/>
</dbReference>
<dbReference type="EMBL" id="AL009126">
    <property type="protein sequence ID" value="CAB12203.2"/>
    <property type="molecule type" value="Genomic_DNA"/>
</dbReference>
<dbReference type="PIR" id="F69764">
    <property type="entry name" value="F69764"/>
</dbReference>
<dbReference type="RefSeq" id="NP_388277.2">
    <property type="nucleotide sequence ID" value="NC_000964.3"/>
</dbReference>
<dbReference type="RefSeq" id="WP_003246637.1">
    <property type="nucleotide sequence ID" value="NZ_OZ025638.1"/>
</dbReference>
<dbReference type="SMR" id="C0SP95"/>
<dbReference type="FunCoup" id="C0SP95">
    <property type="interactions" value="7"/>
</dbReference>
<dbReference type="STRING" id="224308.BSU03950"/>
<dbReference type="PaxDb" id="224308-BSU03950"/>
<dbReference type="EnsemblBacteria" id="CAB12203">
    <property type="protein sequence ID" value="CAB12203"/>
    <property type="gene ID" value="BSU_03950"/>
</dbReference>
<dbReference type="GeneID" id="938258"/>
<dbReference type="KEGG" id="bsu:BSU03950"/>
<dbReference type="PATRIC" id="fig|224308.179.peg.418"/>
<dbReference type="eggNOG" id="COG1276">
    <property type="taxonomic scope" value="Bacteria"/>
</dbReference>
<dbReference type="eggNOG" id="COG2372">
    <property type="taxonomic scope" value="Bacteria"/>
</dbReference>
<dbReference type="InParanoid" id="C0SP95"/>
<dbReference type="OrthoDB" id="2353937at2"/>
<dbReference type="PhylomeDB" id="C0SP95"/>
<dbReference type="BioCyc" id="BSUB:BSU03950-MONOMER"/>
<dbReference type="Proteomes" id="UP000001570">
    <property type="component" value="Chromosome"/>
</dbReference>
<dbReference type="GO" id="GO:0042597">
    <property type="term" value="C:periplasmic space"/>
    <property type="evidence" value="ECO:0007669"/>
    <property type="project" value="InterPro"/>
</dbReference>
<dbReference type="GO" id="GO:0005886">
    <property type="term" value="C:plasma membrane"/>
    <property type="evidence" value="ECO:0000318"/>
    <property type="project" value="GO_Central"/>
</dbReference>
<dbReference type="GO" id="GO:0005507">
    <property type="term" value="F:copper ion binding"/>
    <property type="evidence" value="ECO:0007669"/>
    <property type="project" value="InterPro"/>
</dbReference>
<dbReference type="GO" id="GO:0006825">
    <property type="term" value="P:copper ion transport"/>
    <property type="evidence" value="ECO:0007669"/>
    <property type="project" value="UniProtKB-KW"/>
</dbReference>
<dbReference type="GO" id="GO:0046688">
    <property type="term" value="P:response to copper ion"/>
    <property type="evidence" value="ECO:0007669"/>
    <property type="project" value="InterPro"/>
</dbReference>
<dbReference type="Gene3D" id="2.60.40.1220">
    <property type="match status" value="1"/>
</dbReference>
<dbReference type="InterPro" id="IPR032694">
    <property type="entry name" value="CopC/D"/>
</dbReference>
<dbReference type="InterPro" id="IPR007348">
    <property type="entry name" value="CopC_dom"/>
</dbReference>
<dbReference type="InterPro" id="IPR008457">
    <property type="entry name" value="Cu-R_CopD_dom"/>
</dbReference>
<dbReference type="InterPro" id="IPR014755">
    <property type="entry name" value="Cu-Rt/internalin_Ig-like"/>
</dbReference>
<dbReference type="InterPro" id="IPR014756">
    <property type="entry name" value="Ig_E-set"/>
</dbReference>
<dbReference type="PANTHER" id="PTHR34820">
    <property type="entry name" value="INNER MEMBRANE PROTEIN YEBZ"/>
    <property type="match status" value="1"/>
</dbReference>
<dbReference type="PANTHER" id="PTHR34820:SF4">
    <property type="entry name" value="INNER MEMBRANE PROTEIN YEBZ"/>
    <property type="match status" value="1"/>
</dbReference>
<dbReference type="Pfam" id="PF04234">
    <property type="entry name" value="CopC"/>
    <property type="match status" value="1"/>
</dbReference>
<dbReference type="Pfam" id="PF05425">
    <property type="entry name" value="CopD"/>
    <property type="match status" value="1"/>
</dbReference>
<dbReference type="SUPFAM" id="SSF81296">
    <property type="entry name" value="E set domains"/>
    <property type="match status" value="1"/>
</dbReference>
<proteinExistence type="evidence at protein level"/>
<name>CUTJ_BACSU</name>
<accession>C0SP95</accession>
<accession>P94432</accession>
<accession>Q797N3</accession>
<reference key="1">
    <citation type="journal article" date="1996" name="Microbiology">
        <title>The 25 degrees-36 degrees region of the Bacillus subtilis chromosome: determination of the sequence of a 146 kb segment and identification of 113 genes.</title>
        <authorList>
            <person name="Yamane K."/>
            <person name="Kumano M."/>
            <person name="Kurita K."/>
        </authorList>
    </citation>
    <scope>NUCLEOTIDE SEQUENCE [GENOMIC DNA]</scope>
    <source>
        <strain>168</strain>
    </source>
</reference>
<reference key="2">
    <citation type="journal article" date="1997" name="Nature">
        <title>The complete genome sequence of the Gram-positive bacterium Bacillus subtilis.</title>
        <authorList>
            <person name="Kunst F."/>
            <person name="Ogasawara N."/>
            <person name="Moszer I."/>
            <person name="Albertini A.M."/>
            <person name="Alloni G."/>
            <person name="Azevedo V."/>
            <person name="Bertero M.G."/>
            <person name="Bessieres P."/>
            <person name="Bolotin A."/>
            <person name="Borchert S."/>
            <person name="Borriss R."/>
            <person name="Boursier L."/>
            <person name="Brans A."/>
            <person name="Braun M."/>
            <person name="Brignell S.C."/>
            <person name="Bron S."/>
            <person name="Brouillet S."/>
            <person name="Bruschi C.V."/>
            <person name="Caldwell B."/>
            <person name="Capuano V."/>
            <person name="Carter N.M."/>
            <person name="Choi S.-K."/>
            <person name="Codani J.-J."/>
            <person name="Connerton I.F."/>
            <person name="Cummings N.J."/>
            <person name="Daniel R.A."/>
            <person name="Denizot F."/>
            <person name="Devine K.M."/>
            <person name="Duesterhoeft A."/>
            <person name="Ehrlich S.D."/>
            <person name="Emmerson P.T."/>
            <person name="Entian K.-D."/>
            <person name="Errington J."/>
            <person name="Fabret C."/>
            <person name="Ferrari E."/>
            <person name="Foulger D."/>
            <person name="Fritz C."/>
            <person name="Fujita M."/>
            <person name="Fujita Y."/>
            <person name="Fuma S."/>
            <person name="Galizzi A."/>
            <person name="Galleron N."/>
            <person name="Ghim S.-Y."/>
            <person name="Glaser P."/>
            <person name="Goffeau A."/>
            <person name="Golightly E.J."/>
            <person name="Grandi G."/>
            <person name="Guiseppi G."/>
            <person name="Guy B.J."/>
            <person name="Haga K."/>
            <person name="Haiech J."/>
            <person name="Harwood C.R."/>
            <person name="Henaut A."/>
            <person name="Hilbert H."/>
            <person name="Holsappel S."/>
            <person name="Hosono S."/>
            <person name="Hullo M.-F."/>
            <person name="Itaya M."/>
            <person name="Jones L.-M."/>
            <person name="Joris B."/>
            <person name="Karamata D."/>
            <person name="Kasahara Y."/>
            <person name="Klaerr-Blanchard M."/>
            <person name="Klein C."/>
            <person name="Kobayashi Y."/>
            <person name="Koetter P."/>
            <person name="Koningstein G."/>
            <person name="Krogh S."/>
            <person name="Kumano M."/>
            <person name="Kurita K."/>
            <person name="Lapidus A."/>
            <person name="Lardinois S."/>
            <person name="Lauber J."/>
            <person name="Lazarevic V."/>
            <person name="Lee S.-M."/>
            <person name="Levine A."/>
            <person name="Liu H."/>
            <person name="Masuda S."/>
            <person name="Mauel C."/>
            <person name="Medigue C."/>
            <person name="Medina N."/>
            <person name="Mellado R.P."/>
            <person name="Mizuno M."/>
            <person name="Moestl D."/>
            <person name="Nakai S."/>
            <person name="Noback M."/>
            <person name="Noone D."/>
            <person name="O'Reilly M."/>
            <person name="Ogawa K."/>
            <person name="Ogiwara A."/>
            <person name="Oudega B."/>
            <person name="Park S.-H."/>
            <person name="Parro V."/>
            <person name="Pohl T.M."/>
            <person name="Portetelle D."/>
            <person name="Porwollik S."/>
            <person name="Prescott A.M."/>
            <person name="Presecan E."/>
            <person name="Pujic P."/>
            <person name="Purnelle B."/>
            <person name="Rapoport G."/>
            <person name="Rey M."/>
            <person name="Reynolds S."/>
            <person name="Rieger M."/>
            <person name="Rivolta C."/>
            <person name="Rocha E."/>
            <person name="Roche B."/>
            <person name="Rose M."/>
            <person name="Sadaie Y."/>
            <person name="Sato T."/>
            <person name="Scanlan E."/>
            <person name="Schleich S."/>
            <person name="Schroeter R."/>
            <person name="Scoffone F."/>
            <person name="Sekiguchi J."/>
            <person name="Sekowska A."/>
            <person name="Seror S.J."/>
            <person name="Serror P."/>
            <person name="Shin B.-S."/>
            <person name="Soldo B."/>
            <person name="Sorokin A."/>
            <person name="Tacconi E."/>
            <person name="Takagi T."/>
            <person name="Takahashi H."/>
            <person name="Takemaru K."/>
            <person name="Takeuchi M."/>
            <person name="Tamakoshi A."/>
            <person name="Tanaka T."/>
            <person name="Terpstra P."/>
            <person name="Tognoni A."/>
            <person name="Tosato V."/>
            <person name="Uchiyama S."/>
            <person name="Vandenbol M."/>
            <person name="Vannier F."/>
            <person name="Vassarotti A."/>
            <person name="Viari A."/>
            <person name="Wambutt R."/>
            <person name="Wedler E."/>
            <person name="Wedler H."/>
            <person name="Weitzenegger T."/>
            <person name="Winters P."/>
            <person name="Wipat A."/>
            <person name="Yamamoto H."/>
            <person name="Yamane K."/>
            <person name="Yasumoto K."/>
            <person name="Yata K."/>
            <person name="Yoshida K."/>
            <person name="Yoshikawa H.-F."/>
            <person name="Zumstein E."/>
            <person name="Yoshikawa H."/>
            <person name="Danchin A."/>
        </authorList>
    </citation>
    <scope>NUCLEOTIDE SEQUENCE [LARGE SCALE GENOMIC DNA]</scope>
    <source>
        <strain>168</strain>
    </source>
</reference>
<reference key="3">
    <citation type="journal article" date="2009" name="Microbiology">
        <title>From a consortium sequence to a unified sequence: the Bacillus subtilis 168 reference genome a decade later.</title>
        <authorList>
            <person name="Barbe V."/>
            <person name="Cruveiller S."/>
            <person name="Kunst F."/>
            <person name="Lenoble P."/>
            <person name="Meurice G."/>
            <person name="Sekowska A."/>
            <person name="Vallenet D."/>
            <person name="Wang T."/>
            <person name="Moszer I."/>
            <person name="Medigue C."/>
            <person name="Danchin A."/>
        </authorList>
    </citation>
    <scope>SEQUENCE REVISION TO 70</scope>
</reference>
<reference key="4">
    <citation type="journal article" date="2009" name="J. Bacteriol.">
        <title>Copper acquisition is mediated by ycnJ and regulated by ycnK and csoR in Bacillus subtilis.</title>
        <authorList>
            <person name="Chillappagari S."/>
            <person name="Miethke M."/>
            <person name="Trip H."/>
            <person name="Kuipers O.P."/>
            <person name="Marahiel M.A."/>
        </authorList>
    </citation>
    <scope>FUNCTION IN COPPER UPTAKE</scope>
    <scope>INDUCTION</scope>
    <scope>DISRUPTION PHENOTYPE</scope>
    <source>
        <strain>ATCC 21332 / IAM 1213</strain>
    </source>
</reference>
<gene>
    <name evidence="4" type="primary">cutJ</name>
    <name type="synonym">ycnJ</name>
    <name evidence="4" type="ordered locus">BSU03950</name>
</gene>
<feature type="signal peptide" evidence="1">
    <location>
        <begin position="1"/>
        <end position="25"/>
    </location>
</feature>
<feature type="chain" id="PRO_0000377727" description="Copper transport protein CutJ">
    <location>
        <begin position="26"/>
        <end position="541"/>
    </location>
</feature>
<feature type="transmembrane region" description="Helical" evidence="1">
    <location>
        <begin position="146"/>
        <end position="166"/>
    </location>
</feature>
<feature type="transmembrane region" description="Helical" evidence="1">
    <location>
        <begin position="180"/>
        <end position="200"/>
    </location>
</feature>
<feature type="transmembrane region" description="Helical" evidence="1">
    <location>
        <begin position="228"/>
        <end position="248"/>
    </location>
</feature>
<feature type="transmembrane region" description="Helical" evidence="1">
    <location>
        <begin position="262"/>
        <end position="282"/>
    </location>
</feature>
<feature type="transmembrane region" description="Helical" evidence="1">
    <location>
        <begin position="293"/>
        <end position="313"/>
    </location>
</feature>
<feature type="transmembrane region" description="Helical" evidence="1">
    <location>
        <begin position="335"/>
        <end position="355"/>
    </location>
</feature>
<feature type="transmembrane region" description="Helical" evidence="1">
    <location>
        <begin position="370"/>
        <end position="390"/>
    </location>
</feature>
<feature type="transmembrane region" description="Helical" evidence="1">
    <location>
        <begin position="407"/>
        <end position="427"/>
    </location>
</feature>
<feature type="binding site" evidence="1">
    <location>
        <position position="24"/>
    </location>
    <ligand>
        <name>Cu cation</name>
        <dbReference type="ChEBI" id="CHEBI:23378"/>
    </ligand>
</feature>
<feature type="binding site" evidence="1">
    <location>
        <position position="110"/>
    </location>
    <ligand>
        <name>Cu cation</name>
        <dbReference type="ChEBI" id="CHEBI:23378"/>
    </ligand>
</feature>
<feature type="sequence conflict" description="In Ref. 1; BAA09026." evidence="3" ref="1">
    <original>V</original>
    <variation>L</variation>
    <location>
        <position position="70"/>
    </location>
</feature>
<organism>
    <name type="scientific">Bacillus subtilis (strain 168)</name>
    <dbReference type="NCBI Taxonomy" id="224308"/>
    <lineage>
        <taxon>Bacteria</taxon>
        <taxon>Bacillati</taxon>
        <taxon>Bacillota</taxon>
        <taxon>Bacilli</taxon>
        <taxon>Bacillales</taxon>
        <taxon>Bacillaceae</taxon>
        <taxon>Bacillus</taxon>
    </lineage>
</organism>
<comment type="function">
    <text evidence="2">Involved in uptake of extracellular oxidized copper under copper-limiting conditions.</text>
</comment>
<comment type="subcellular location">
    <subcellularLocation>
        <location evidence="3">Cell membrane</location>
        <topology evidence="1">Multi-pass membrane protein</topology>
    </subcellularLocation>
</comment>
<comment type="induction">
    <text evidence="2">Highly induced under copper-limiting conditions. Down-regulated by CutR/YcnK, especially under high copper concentrations. Down-regulated by CsoR.</text>
</comment>
<comment type="disruption phenotype">
    <text evidence="2">Cells lacking this gene show a growth-defective phenotype under copper deprivation as well as a reduced intracellular content of copper.</text>
</comment>
<comment type="similarity">
    <text evidence="3">In the N-terminal section; belongs to the CopC family.</text>
</comment>
<comment type="similarity">
    <text evidence="3">In the C-terminal section; belongs to the CopD family.</text>
</comment>